<comment type="function">
    <text evidence="1">One of the primary rRNA binding proteins, it binds directly to 16S rRNA where it nucleates assembly of the body of the 30S subunit.</text>
</comment>
<comment type="function">
    <text evidence="1">With S5 and S12 plays an important role in translational accuracy.</text>
</comment>
<comment type="subunit">
    <text evidence="1">Part of the 30S ribosomal subunit. Contacts protein S5. The interaction surface between S4 and S5 is involved in control of translational fidelity (By similarity).</text>
</comment>
<comment type="subcellular location">
    <subcellularLocation>
        <location>Plastid</location>
        <location>Chloroplast</location>
    </subcellularLocation>
</comment>
<comment type="similarity">
    <text evidence="2">Belongs to the universal ribosomal protein uS4 family.</text>
</comment>
<evidence type="ECO:0000250" key="1"/>
<evidence type="ECO:0000305" key="2"/>
<geneLocation type="chloroplast"/>
<keyword id="KW-0150">Chloroplast</keyword>
<keyword id="KW-0934">Plastid</keyword>
<keyword id="KW-0687">Ribonucleoprotein</keyword>
<keyword id="KW-0689">Ribosomal protein</keyword>
<keyword id="KW-0694">RNA-binding</keyword>
<keyword id="KW-0699">rRNA-binding</keyword>
<protein>
    <recommendedName>
        <fullName evidence="2">Small ribosomal subunit protein uS4c</fullName>
    </recommendedName>
    <alternativeName>
        <fullName>30S ribosomal protein S4, chloroplastic</fullName>
    </alternativeName>
</protein>
<sequence length="202" mass="23561">MSRYRGPRLKIIRRLGELPGLTRKTPKLKPDYINKSTPNKKVSQYCIRLEEKQKLRFHHGLAEQQLLKYVRIARRAKGSTGQVLLQLLEMRLDNIIFRLGMAPTIPGARQLVNHKHILVNNRAINVPSYRCKPKDIITTRDRPESRARITKNYEFSQTYKIPNHLTLHSLQSVGLVNKIVDRESIDLNINELLVVEYYSRKA</sequence>
<proteinExistence type="inferred from homology"/>
<gene>
    <name type="primary">rps4</name>
</gene>
<feature type="chain" id="PRO_0000132602" description="Small ribosomal subunit protein uS4c">
    <location>
        <begin position="1"/>
        <end position="202"/>
    </location>
</feature>
<feature type="domain" description="S4 RNA-binding">
    <location>
        <begin position="90"/>
        <end position="159"/>
    </location>
</feature>
<dbReference type="EMBL" id="AY660566">
    <property type="protein sequence ID" value="AAT80723.1"/>
    <property type="molecule type" value="Genomic_DNA"/>
</dbReference>
<dbReference type="RefSeq" id="YP_209527.1">
    <property type="nucleotide sequence ID" value="NC_006861.1"/>
</dbReference>
<dbReference type="SMR" id="Q5SD08"/>
<dbReference type="GeneID" id="3283806"/>
<dbReference type="GO" id="GO:0009507">
    <property type="term" value="C:chloroplast"/>
    <property type="evidence" value="ECO:0007669"/>
    <property type="project" value="UniProtKB-SubCell"/>
</dbReference>
<dbReference type="GO" id="GO:0015935">
    <property type="term" value="C:small ribosomal subunit"/>
    <property type="evidence" value="ECO:0007669"/>
    <property type="project" value="InterPro"/>
</dbReference>
<dbReference type="GO" id="GO:0019843">
    <property type="term" value="F:rRNA binding"/>
    <property type="evidence" value="ECO:0007669"/>
    <property type="project" value="UniProtKB-UniRule"/>
</dbReference>
<dbReference type="GO" id="GO:0003735">
    <property type="term" value="F:structural constituent of ribosome"/>
    <property type="evidence" value="ECO:0007669"/>
    <property type="project" value="InterPro"/>
</dbReference>
<dbReference type="GO" id="GO:0042274">
    <property type="term" value="P:ribosomal small subunit biogenesis"/>
    <property type="evidence" value="ECO:0007669"/>
    <property type="project" value="TreeGrafter"/>
</dbReference>
<dbReference type="GO" id="GO:0006412">
    <property type="term" value="P:translation"/>
    <property type="evidence" value="ECO:0007669"/>
    <property type="project" value="UniProtKB-UniRule"/>
</dbReference>
<dbReference type="CDD" id="cd00165">
    <property type="entry name" value="S4"/>
    <property type="match status" value="1"/>
</dbReference>
<dbReference type="FunFam" id="1.10.1050.10:FF:000002">
    <property type="entry name" value="30S ribosomal protein S4, chloroplastic"/>
    <property type="match status" value="1"/>
</dbReference>
<dbReference type="FunFam" id="3.10.290.10:FF:000081">
    <property type="entry name" value="30S ribosomal protein S4, chloroplastic"/>
    <property type="match status" value="1"/>
</dbReference>
<dbReference type="Gene3D" id="1.10.1050.10">
    <property type="entry name" value="Ribosomal Protein S4 Delta 41, Chain A, domain 1"/>
    <property type="match status" value="1"/>
</dbReference>
<dbReference type="Gene3D" id="3.10.290.10">
    <property type="entry name" value="RNA-binding S4 domain"/>
    <property type="match status" value="1"/>
</dbReference>
<dbReference type="HAMAP" id="MF_01306_B">
    <property type="entry name" value="Ribosomal_uS4_B"/>
    <property type="match status" value="1"/>
</dbReference>
<dbReference type="InterPro" id="IPR022801">
    <property type="entry name" value="Ribosomal_uS4"/>
</dbReference>
<dbReference type="InterPro" id="IPR005709">
    <property type="entry name" value="Ribosomal_uS4_bac-type"/>
</dbReference>
<dbReference type="InterPro" id="IPR018079">
    <property type="entry name" value="Ribosomal_uS4_CS"/>
</dbReference>
<dbReference type="InterPro" id="IPR001912">
    <property type="entry name" value="Ribosomal_uS4_N"/>
</dbReference>
<dbReference type="InterPro" id="IPR002942">
    <property type="entry name" value="S4_RNA-bd"/>
</dbReference>
<dbReference type="InterPro" id="IPR036986">
    <property type="entry name" value="S4_RNA-bd_sf"/>
</dbReference>
<dbReference type="NCBIfam" id="NF003717">
    <property type="entry name" value="PRK05327.1"/>
    <property type="match status" value="1"/>
</dbReference>
<dbReference type="NCBIfam" id="TIGR01017">
    <property type="entry name" value="rpsD_bact"/>
    <property type="match status" value="1"/>
</dbReference>
<dbReference type="PANTHER" id="PTHR11831">
    <property type="entry name" value="30S 40S RIBOSOMAL PROTEIN"/>
    <property type="match status" value="1"/>
</dbReference>
<dbReference type="PANTHER" id="PTHR11831:SF4">
    <property type="entry name" value="SMALL RIBOSOMAL SUBUNIT PROTEIN US4M"/>
    <property type="match status" value="1"/>
</dbReference>
<dbReference type="Pfam" id="PF00163">
    <property type="entry name" value="Ribosomal_S4"/>
    <property type="match status" value="1"/>
</dbReference>
<dbReference type="Pfam" id="PF01479">
    <property type="entry name" value="S4"/>
    <property type="match status" value="1"/>
</dbReference>
<dbReference type="SMART" id="SM01390">
    <property type="entry name" value="Ribosomal_S4"/>
    <property type="match status" value="1"/>
</dbReference>
<dbReference type="SMART" id="SM00363">
    <property type="entry name" value="S4"/>
    <property type="match status" value="1"/>
</dbReference>
<dbReference type="SUPFAM" id="SSF55174">
    <property type="entry name" value="Alpha-L RNA-binding motif"/>
    <property type="match status" value="1"/>
</dbReference>
<dbReference type="PROSITE" id="PS00632">
    <property type="entry name" value="RIBOSOMAL_S4"/>
    <property type="match status" value="1"/>
</dbReference>
<dbReference type="PROSITE" id="PS50889">
    <property type="entry name" value="S4"/>
    <property type="match status" value="1"/>
</dbReference>
<organism>
    <name type="scientific">Huperzia lucidula</name>
    <name type="common">Shining clubmoss</name>
    <name type="synonym">Lycopodium lucidulum</name>
    <dbReference type="NCBI Taxonomy" id="37429"/>
    <lineage>
        <taxon>Eukaryota</taxon>
        <taxon>Viridiplantae</taxon>
        <taxon>Streptophyta</taxon>
        <taxon>Embryophyta</taxon>
        <taxon>Tracheophyta</taxon>
        <taxon>Lycopodiopsida</taxon>
        <taxon>Lycopodiales</taxon>
        <taxon>Lycopodiaceae</taxon>
        <taxon>Huperzioideae</taxon>
        <taxon>Huperzia</taxon>
    </lineage>
</organism>
<accession>Q5SD08</accession>
<reference key="1">
    <citation type="journal article" date="2005" name="Gene">
        <title>The first complete chloroplast genome sequence of a lycophyte, Huperzia lucidula (Lycopodiaceae).</title>
        <authorList>
            <person name="Wolf P.G."/>
            <person name="Karol K.G."/>
            <person name="Mandoli D.F."/>
            <person name="Kuehl J.V."/>
            <person name="Arumuganathan K."/>
            <person name="Ellis M.W."/>
            <person name="Mishler B.D."/>
            <person name="Kelch D.G."/>
            <person name="Olmstead R.G."/>
            <person name="Boore J.L."/>
        </authorList>
    </citation>
    <scope>NUCLEOTIDE SEQUENCE [LARGE SCALE GENOMIC DNA]</scope>
</reference>
<name>RR4_HUPLU</name>